<comment type="function">
    <text evidence="3 5">Mitochondrial membrane ATP synthase (F(1)F(0) ATP synthase or Complex V) produces ATP from ADP in the presence of a proton gradient across the membrane which is generated by electron transport complexes of the respiratory chain (Probable). F-type ATPases consist of two structural domains, F(1) - containing the extramembraneous catalytic core and F(0) - containing the membrane proton channel, linked together by a central stalk and a peripheral stalk (Probable). During catalysis, ATP synthesis in the catalytic domain of F(1) is coupled via a rotary mechanism of the central stalk subunits to proton translocation (Probable). Part of the complex F(0) domain (Probable). Confers tolerance to several abiotic stresses (e.g. salt, mannitol, drought, oxidative and cold stresses), probably by providing additional energy needed for cell homeostasis (PubMed:23096681).</text>
</comment>
<comment type="subcellular location">
    <subcellularLocation>
        <location evidence="1">Mitochondrion inner membrane</location>
        <topology evidence="2">Single-pass membrane protein</topology>
    </subcellularLocation>
</comment>
<comment type="similarity">
    <text evidence="5">Belongs to the ATPase 6 subunit family.</text>
</comment>
<accession>P0DO45</accession>
<accession>A0A178V8C6</accession>
<accession>Q9SN96</accession>
<feature type="transit peptide" description="Mitochondrion" evidence="2">
    <location>
        <begin position="1"/>
        <end position="11"/>
    </location>
</feature>
<feature type="chain" id="PRO_0000454201" description="ATP synthase small subunit 6-B, mitochondrial">
    <location>
        <begin position="12"/>
        <end position="55"/>
    </location>
</feature>
<feature type="transmembrane region" description="Helical" evidence="2">
    <location>
        <begin position="21"/>
        <end position="39"/>
    </location>
</feature>
<protein>
    <recommendedName>
        <fullName evidence="4">ATP synthase small subunit 6-B, mitochondrial</fullName>
        <shortName evidence="4">AtMtATP6</shortName>
        <shortName evidence="4">MtATP6</shortName>
    </recommendedName>
    <alternativeName>
        <fullName evidence="5">ATP synthase 6 kDa subunit, mitochondrial</fullName>
    </alternativeName>
</protein>
<reference key="1">
    <citation type="journal article" date="1997" name="DNA Res.">
        <title>Structural analysis of Arabidopsis thaliana chromosome 5. II. Sequence features of the regions of 1,044,062 bp covered by thirteen physically assigned P1 clones.</title>
        <authorList>
            <person name="Kotani H."/>
            <person name="Nakamura Y."/>
            <person name="Sato S."/>
            <person name="Kaneko T."/>
            <person name="Asamizu E."/>
            <person name="Miyajima N."/>
            <person name="Tabata S."/>
        </authorList>
    </citation>
    <scope>NUCLEOTIDE SEQUENCE [LARGE SCALE GENOMIC DNA]</scope>
    <source>
        <strain>cv. Columbia</strain>
    </source>
</reference>
<reference key="2">
    <citation type="journal article" date="2017" name="Plant J.">
        <title>Araport11: a complete reannotation of the Arabidopsis thaliana reference genome.</title>
        <authorList>
            <person name="Cheng C.Y."/>
            <person name="Krishnakumar V."/>
            <person name="Chan A.P."/>
            <person name="Thibaud-Nissen F."/>
            <person name="Schobel S."/>
            <person name="Town C.D."/>
        </authorList>
    </citation>
    <scope>GENOME REANNOTATION</scope>
    <source>
        <strain>cv. Columbia</strain>
    </source>
</reference>
<reference key="3">
    <citation type="journal article" date="2002" name="Science">
        <title>Functional annotation of a full-length Arabidopsis cDNA collection.</title>
        <authorList>
            <person name="Seki M."/>
            <person name="Narusaka M."/>
            <person name="Kamiya A."/>
            <person name="Ishida J."/>
            <person name="Satou M."/>
            <person name="Sakurai T."/>
            <person name="Nakajima M."/>
            <person name="Enju A."/>
            <person name="Akiyama K."/>
            <person name="Oono Y."/>
            <person name="Muramatsu M."/>
            <person name="Hayashizaki Y."/>
            <person name="Kawai J."/>
            <person name="Carninci P."/>
            <person name="Itoh M."/>
            <person name="Ishii Y."/>
            <person name="Arakawa T."/>
            <person name="Shibata K."/>
            <person name="Shinagawa A."/>
            <person name="Shinozaki K."/>
        </authorList>
    </citation>
    <scope>NUCLEOTIDE SEQUENCE [LARGE SCALE MRNA]</scope>
    <source>
        <strain>cv. Columbia</strain>
    </source>
</reference>
<reference key="4">
    <citation type="journal article" date="2003" name="Science">
        <title>Empirical analysis of transcriptional activity in the Arabidopsis genome.</title>
        <authorList>
            <person name="Yamada K."/>
            <person name="Lim J."/>
            <person name="Dale J.M."/>
            <person name="Chen H."/>
            <person name="Shinn P."/>
            <person name="Palm C.J."/>
            <person name="Southwick A.M."/>
            <person name="Wu H.C."/>
            <person name="Kim C.J."/>
            <person name="Nguyen M."/>
            <person name="Pham P.K."/>
            <person name="Cheuk R.F."/>
            <person name="Karlin-Newmann G."/>
            <person name="Liu S.X."/>
            <person name="Lam B."/>
            <person name="Sakano H."/>
            <person name="Wu T."/>
            <person name="Yu G."/>
            <person name="Miranda M."/>
            <person name="Quach H.L."/>
            <person name="Tripp M."/>
            <person name="Chang C.H."/>
            <person name="Lee J.M."/>
            <person name="Toriumi M.J."/>
            <person name="Chan M.M."/>
            <person name="Tang C.C."/>
            <person name="Onodera C.S."/>
            <person name="Deng J.M."/>
            <person name="Akiyama K."/>
            <person name="Ansari Y."/>
            <person name="Arakawa T."/>
            <person name="Banh J."/>
            <person name="Banno F."/>
            <person name="Bowser L."/>
            <person name="Brooks S.Y."/>
            <person name="Carninci P."/>
            <person name="Chao Q."/>
            <person name="Choy N."/>
            <person name="Enju A."/>
            <person name="Goldsmith A.D."/>
            <person name="Gurjal M."/>
            <person name="Hansen N.F."/>
            <person name="Hayashizaki Y."/>
            <person name="Johnson-Hopson C."/>
            <person name="Hsuan V.W."/>
            <person name="Iida K."/>
            <person name="Karnes M."/>
            <person name="Khan S."/>
            <person name="Koesema E."/>
            <person name="Ishida J."/>
            <person name="Jiang P.X."/>
            <person name="Jones T."/>
            <person name="Kawai J."/>
            <person name="Kamiya A."/>
            <person name="Meyers C."/>
            <person name="Nakajima M."/>
            <person name="Narusaka M."/>
            <person name="Seki M."/>
            <person name="Sakurai T."/>
            <person name="Satou M."/>
            <person name="Tamse R."/>
            <person name="Vaysberg M."/>
            <person name="Wallender E.K."/>
            <person name="Wong C."/>
            <person name="Yamamura Y."/>
            <person name="Yuan S."/>
            <person name="Shinozaki K."/>
            <person name="Davis R.W."/>
            <person name="Theologis A."/>
            <person name="Ecker J.R."/>
        </authorList>
    </citation>
    <scope>NUCLEOTIDE SEQUENCE [LARGE SCALE MRNA]</scope>
    <source>
        <strain>cv. Columbia</strain>
    </source>
</reference>
<reference key="5">
    <citation type="journal article" date="2012" name="Genet. Mol. Res.">
        <title>Isolation and in silico functional analysis of MtATP6, a 6-kDa subunit of mitochondrial F(1)F0-ATP synthase, in response to abiotic stress.</title>
        <authorList>
            <person name="Moghadam A.A."/>
            <person name="Taghavi S.M."/>
            <person name="Niazi A."/>
            <person name="Djavaheri M."/>
            <person name="Ebrahimie E."/>
        </authorList>
    </citation>
    <scope>FUNCTION</scope>
    <scope>INDUCTION BY ABIOTIC STRESSES</scope>
</reference>
<keyword id="KW-0138">CF(0)</keyword>
<keyword id="KW-0375">Hydrogen ion transport</keyword>
<keyword id="KW-0406">Ion transport</keyword>
<keyword id="KW-0472">Membrane</keyword>
<keyword id="KW-0496">Mitochondrion</keyword>
<keyword id="KW-0999">Mitochondrion inner membrane</keyword>
<keyword id="KW-1185">Reference proteome</keyword>
<keyword id="KW-0346">Stress response</keyword>
<keyword id="KW-0809">Transit peptide</keyword>
<keyword id="KW-0812">Transmembrane</keyword>
<keyword id="KW-1133">Transmembrane helix</keyword>
<keyword id="KW-0813">Transport</keyword>
<name>ATP6B_ARATH</name>
<dbReference type="EMBL" id="AB006705">
    <property type="status" value="NOT_ANNOTATED_CDS"/>
    <property type="molecule type" value="Genomic_DNA"/>
</dbReference>
<dbReference type="EMBL" id="CP002688">
    <property type="protein sequence ID" value="AED97213.1"/>
    <property type="molecule type" value="Genomic_DNA"/>
</dbReference>
<dbReference type="EMBL" id="CP002688">
    <property type="protein sequence ID" value="AED97214.1"/>
    <property type="molecule type" value="Genomic_DNA"/>
</dbReference>
<dbReference type="EMBL" id="AK118417">
    <property type="protein sequence ID" value="BAC43026.1"/>
    <property type="molecule type" value="mRNA"/>
</dbReference>
<dbReference type="EMBL" id="AY062836">
    <property type="protein sequence ID" value="AAL32914.1"/>
    <property type="molecule type" value="mRNA"/>
</dbReference>
<dbReference type="RefSeq" id="NP_001190570.1">
    <property type="nucleotide sequence ID" value="NM_001203641.1"/>
</dbReference>
<dbReference type="RefSeq" id="NP_190227.1">
    <property type="nucleotide sequence ID" value="NM_114510.3"/>
</dbReference>
<dbReference type="RefSeq" id="NP_680457.1">
    <property type="nucleotide sequence ID" value="NM_148152.2"/>
</dbReference>
<dbReference type="SMR" id="P0DO45"/>
<dbReference type="FunCoup" id="P0DO45">
    <property type="interactions" value="68"/>
</dbReference>
<dbReference type="EnsemblPlants" id="AT3G46430.1">
    <property type="protein sequence ID" value="AT3G46430.1"/>
    <property type="gene ID" value="AT3G46430"/>
</dbReference>
<dbReference type="EnsemblPlants" id="AT5G59613.1">
    <property type="protein sequence ID" value="AT5G59613.1"/>
    <property type="gene ID" value="AT5G59613"/>
</dbReference>
<dbReference type="EnsemblPlants" id="AT5G59613.2">
    <property type="protein sequence ID" value="AT5G59613.2"/>
    <property type="gene ID" value="AT5G59613"/>
</dbReference>
<dbReference type="GeneID" id="836081"/>
<dbReference type="Gramene" id="AT3G46430.1">
    <property type="protein sequence ID" value="AT3G46430.1"/>
    <property type="gene ID" value="AT3G46430"/>
</dbReference>
<dbReference type="Gramene" id="AT5G59613.1">
    <property type="protein sequence ID" value="AT5G59613.1"/>
    <property type="gene ID" value="AT5G59613"/>
</dbReference>
<dbReference type="Gramene" id="AT5G59613.2">
    <property type="protein sequence ID" value="AT5G59613.2"/>
    <property type="gene ID" value="AT5G59613"/>
</dbReference>
<dbReference type="KEGG" id="ath:AT3G46430"/>
<dbReference type="KEGG" id="ath:AT5G59613"/>
<dbReference type="Araport" id="AT5G59613"/>
<dbReference type="TAIR" id="AT5G59613"/>
<dbReference type="InParanoid" id="P0DO45"/>
<dbReference type="OMA" id="REWKRTW"/>
<dbReference type="OrthoDB" id="1021093at2759"/>
<dbReference type="PRO" id="PR:P0DO45"/>
<dbReference type="Proteomes" id="UP000006548">
    <property type="component" value="Chromosome 5"/>
</dbReference>
<dbReference type="GO" id="GO:0005743">
    <property type="term" value="C:mitochondrial inner membrane"/>
    <property type="evidence" value="ECO:0007669"/>
    <property type="project" value="UniProtKB-SubCell"/>
</dbReference>
<dbReference type="GO" id="GO:0045259">
    <property type="term" value="C:proton-transporting ATP synthase complex"/>
    <property type="evidence" value="ECO:0007669"/>
    <property type="project" value="UniProtKB-KW"/>
</dbReference>
<dbReference type="GO" id="GO:1902600">
    <property type="term" value="P:proton transmembrane transport"/>
    <property type="evidence" value="ECO:0007669"/>
    <property type="project" value="UniProtKB-KW"/>
</dbReference>
<dbReference type="GO" id="GO:0009409">
    <property type="term" value="P:response to cold"/>
    <property type="evidence" value="ECO:0000314"/>
    <property type="project" value="UniProtKB"/>
</dbReference>
<dbReference type="GO" id="GO:1902074">
    <property type="term" value="P:response to salt"/>
    <property type="evidence" value="ECO:0000314"/>
    <property type="project" value="UniProtKB"/>
</dbReference>
<dbReference type="GO" id="GO:0009414">
    <property type="term" value="P:response to water deprivation"/>
    <property type="evidence" value="ECO:0000314"/>
    <property type="project" value="UniProtKB"/>
</dbReference>
<dbReference type="InterPro" id="IPR052867">
    <property type="entry name" value="ATP_Synthase_Subunit_6"/>
</dbReference>
<dbReference type="PANTHER" id="PTHR34565">
    <property type="entry name" value="TRANSMEMBRANE PROTEIN"/>
    <property type="match status" value="1"/>
</dbReference>
<dbReference type="PANTHER" id="PTHR34565:SF1">
    <property type="entry name" value="TRANSMEMBRANE PROTEIN"/>
    <property type="match status" value="1"/>
</dbReference>
<organism>
    <name type="scientific">Arabidopsis thaliana</name>
    <name type="common">Mouse-ear cress</name>
    <dbReference type="NCBI Taxonomy" id="3702"/>
    <lineage>
        <taxon>Eukaryota</taxon>
        <taxon>Viridiplantae</taxon>
        <taxon>Streptophyta</taxon>
        <taxon>Embryophyta</taxon>
        <taxon>Tracheophyta</taxon>
        <taxon>Spermatophyta</taxon>
        <taxon>Magnoliopsida</taxon>
        <taxon>eudicotyledons</taxon>
        <taxon>Gunneridae</taxon>
        <taxon>Pentapetalae</taxon>
        <taxon>rosids</taxon>
        <taxon>malvids</taxon>
        <taxon>Brassicales</taxon>
        <taxon>Brassicaceae</taxon>
        <taxon>Camelineae</taxon>
        <taxon>Arabidopsis</taxon>
    </lineage>
</organism>
<evidence type="ECO:0000250" key="1">
    <source>
        <dbReference type="UniProtKB" id="P0DO44"/>
    </source>
</evidence>
<evidence type="ECO:0000255" key="2"/>
<evidence type="ECO:0000269" key="3">
    <source>
    </source>
</evidence>
<evidence type="ECO:0000303" key="4">
    <source>
    </source>
</evidence>
<evidence type="ECO:0000305" key="5"/>
<evidence type="ECO:0000312" key="6">
    <source>
        <dbReference type="Araport" id="AT5G59613"/>
    </source>
</evidence>
<evidence type="ECO:0000312" key="7">
    <source>
        <dbReference type="EMBL" id="AAL32914.1"/>
    </source>
</evidence>
<gene>
    <name evidence="4" type="primary">ATP6</name>
    <name evidence="6" type="ordered locus">At5g59613</name>
    <name evidence="7" type="ORF">MTH12.17</name>
</gene>
<proteinExistence type="evidence at transcript level"/>
<sequence length="55" mass="6585">MRLFDPWPVFFKREWKRCWPFLTGFAVTGVLITKLTAGLTEEDAKNSKFVQQHRR</sequence>